<evidence type="ECO:0000269" key="1">
    <source>
    </source>
</evidence>
<evidence type="ECO:0000269" key="2">
    <source>
    </source>
</evidence>
<evidence type="ECO:0000305" key="3"/>
<name>TSHB_BOVIN</name>
<sequence>MTATFLMSMIFGLACGQAMSFCIPTEYMMHVERKECAYCLTINTTVCAGYCMTRDVNGKLFLPKYALSQDVCTYRDFMYKTAEIPGCPRHVTPYFSYPVAISCKCGKCNTDYSDCIHEAIKTNYCTKPQKSYMVGFSI</sequence>
<protein>
    <recommendedName>
        <fullName>Thyrotropin subunit beta</fullName>
    </recommendedName>
    <alternativeName>
        <fullName>Thyroid-stimulating hormone subunit beta</fullName>
        <shortName>TSH-B</shortName>
        <shortName>TSH-beta</shortName>
    </alternativeName>
    <alternativeName>
        <fullName>Thyrotropin beta chain</fullName>
    </alternativeName>
</protein>
<comment type="function">
    <text>Indispensable for the control of thyroid structure and metabolism.</text>
</comment>
<comment type="subunit">
    <text>Heterodimer of a common alpha chain and a unique beta chain which confers biological specificity to thyrotropin, lutropin, follitropin and gonadotropin.</text>
</comment>
<comment type="subcellular location">
    <subcellularLocation>
        <location>Secreted</location>
    </subcellularLocation>
</comment>
<comment type="similarity">
    <text evidence="3">Belongs to the glycoprotein hormones subunit beta family.</text>
</comment>
<keyword id="KW-0903">Direct protein sequencing</keyword>
<keyword id="KW-1015">Disulfide bond</keyword>
<keyword id="KW-0325">Glycoprotein</keyword>
<keyword id="KW-0372">Hormone</keyword>
<keyword id="KW-1185">Reference proteome</keyword>
<keyword id="KW-0964">Secreted</keyword>
<keyword id="KW-0732">Signal</keyword>
<proteinExistence type="evidence at protein level"/>
<reference key="1">
    <citation type="journal article" date="1984" name="J. Biol. Chem.">
        <title>The sequence of a cloned cDNA for the beta subunit of bovine thyrotropin predicts a protein containing both NH2- and COOH-terminal extensions.</title>
        <authorList>
            <person name="Maurer R.A."/>
            <person name="Croyle M.L."/>
            <person name="Donelson J.E."/>
        </authorList>
    </citation>
    <scope>NUCLEOTIDE SEQUENCE [MRNA]</scope>
</reference>
<reference key="2">
    <citation type="journal article" date="1971" name="J. Biol. Chem.">
        <title>The primary structure of bovine thyrotropin. II. The amino acid sequences of the reduced, S-carboxymethyl alpha and beta chains.</title>
        <authorList>
            <person name="Liao T.-H."/>
            <person name="Pierce J.G."/>
        </authorList>
    </citation>
    <scope>PROTEIN SEQUENCE OF 21-132</scope>
</reference>
<reference key="3">
    <citation type="journal article" date="1971" name="J. Biol. Chem.">
        <title>The primary structure of bovine thyrotropin. I. Isolation and partial sequences of cyanogen bromide and tryptic peptides.</title>
        <authorList>
            <person name="Shome B."/>
            <person name="Liao T.-H."/>
            <person name="Howard S.M."/>
            <person name="Pierce J.G."/>
        </authorList>
    </citation>
    <scope>PARTIAL PROTEIN SEQUENCE</scope>
</reference>
<reference key="4">
    <citation type="journal article" date="1996" name="Biochem. J.">
        <title>The disulphide bond structure of thyroid-stimulating hormone beta-subunit.</title>
        <authorList>
            <person name="Fairlie W.D."/>
            <person name="Stanton P.G."/>
            <person name="Hearn T.W."/>
        </authorList>
    </citation>
    <scope>DISULFIDE BONDS</scope>
</reference>
<accession>P01223</accession>
<feature type="signal peptide" evidence="1">
    <location>
        <begin position="1"/>
        <end position="20"/>
    </location>
</feature>
<feature type="chain" id="PRO_0000011740" description="Thyrotropin subunit beta">
    <location>
        <begin position="21"/>
        <end position="132"/>
    </location>
</feature>
<feature type="propeptide" id="PRO_0000011741">
    <location>
        <begin position="133"/>
        <end position="138"/>
    </location>
</feature>
<feature type="glycosylation site" description="N-linked (GlcNAc...) asparagine">
    <location>
        <position position="43"/>
    </location>
</feature>
<feature type="disulfide bond" evidence="2">
    <location>
        <begin position="22"/>
        <end position="72"/>
    </location>
</feature>
<feature type="disulfide bond" evidence="2">
    <location>
        <begin position="36"/>
        <end position="87"/>
    </location>
</feature>
<feature type="disulfide bond" evidence="2">
    <location>
        <begin position="39"/>
        <end position="125"/>
    </location>
</feature>
<feature type="disulfide bond" evidence="2">
    <location>
        <begin position="47"/>
        <end position="103"/>
    </location>
</feature>
<feature type="disulfide bond" evidence="2">
    <location>
        <begin position="51"/>
        <end position="105"/>
    </location>
</feature>
<feature type="disulfide bond" evidence="2">
    <location>
        <begin position="108"/>
        <end position="115"/>
    </location>
</feature>
<organism>
    <name type="scientific">Bos taurus</name>
    <name type="common">Bovine</name>
    <dbReference type="NCBI Taxonomy" id="9913"/>
    <lineage>
        <taxon>Eukaryota</taxon>
        <taxon>Metazoa</taxon>
        <taxon>Chordata</taxon>
        <taxon>Craniata</taxon>
        <taxon>Vertebrata</taxon>
        <taxon>Euteleostomi</taxon>
        <taxon>Mammalia</taxon>
        <taxon>Eutheria</taxon>
        <taxon>Laurasiatheria</taxon>
        <taxon>Artiodactyla</taxon>
        <taxon>Ruminantia</taxon>
        <taxon>Pecora</taxon>
        <taxon>Bovidae</taxon>
        <taxon>Bovinae</taxon>
        <taxon>Bos</taxon>
    </lineage>
</organism>
<dbReference type="EMBL" id="K01939">
    <property type="protein sequence ID" value="AAA30796.1"/>
    <property type="molecule type" value="mRNA"/>
</dbReference>
<dbReference type="PIR" id="I45985">
    <property type="entry name" value="TTBOB"/>
</dbReference>
<dbReference type="RefSeq" id="NP_776630.1">
    <property type="nucleotide sequence ID" value="NM_174205.1"/>
</dbReference>
<dbReference type="RefSeq" id="XP_005204062.1">
    <property type="nucleotide sequence ID" value="XM_005204005.5"/>
</dbReference>
<dbReference type="SMR" id="P01223"/>
<dbReference type="FunCoup" id="P01223">
    <property type="interactions" value="83"/>
</dbReference>
<dbReference type="STRING" id="9913.ENSBTAP00000008264"/>
<dbReference type="BindingDB" id="P01223"/>
<dbReference type="ChEMBL" id="CHEMBL3988581"/>
<dbReference type="GlyConnect" id="601">
    <property type="glycosylation" value="37 N-Linked glycans"/>
</dbReference>
<dbReference type="GlyCosmos" id="P01223">
    <property type="glycosylation" value="1 site, 70 glycans"/>
</dbReference>
<dbReference type="GlyGen" id="P01223">
    <property type="glycosylation" value="2 sites, 68 N-linked glycans (1 site)"/>
</dbReference>
<dbReference type="PaxDb" id="9913-ENSBTAP00000008264"/>
<dbReference type="Ensembl" id="ENSBTAT00000008264.3">
    <property type="protein sequence ID" value="ENSBTAP00000008264.2"/>
    <property type="gene ID" value="ENSBTAG00000006295.3"/>
</dbReference>
<dbReference type="GeneID" id="281552"/>
<dbReference type="KEGG" id="bta:281552"/>
<dbReference type="CTD" id="7252"/>
<dbReference type="VEuPathDB" id="HostDB:ENSBTAG00000006295"/>
<dbReference type="VGNC" id="VGNC:36418">
    <property type="gene designation" value="TSHB"/>
</dbReference>
<dbReference type="eggNOG" id="ENOG502S2JW">
    <property type="taxonomic scope" value="Eukaryota"/>
</dbReference>
<dbReference type="GeneTree" id="ENSGT00940000158152"/>
<dbReference type="HOGENOM" id="CLU_126319_0_2_1"/>
<dbReference type="InParanoid" id="P01223"/>
<dbReference type="OMA" id="PTEYMMH"/>
<dbReference type="OrthoDB" id="8866353at2759"/>
<dbReference type="TreeFam" id="TF332940"/>
<dbReference type="Reactome" id="R-BTA-209822">
    <property type="pathway name" value="Glycoprotein hormones"/>
</dbReference>
<dbReference type="Reactome" id="R-BTA-209968">
    <property type="pathway name" value="Thyroxine biosynthesis"/>
</dbReference>
<dbReference type="Reactome" id="R-BTA-375281">
    <property type="pathway name" value="Hormone ligand-binding receptors"/>
</dbReference>
<dbReference type="Reactome" id="R-BTA-418555">
    <property type="pathway name" value="G alpha (s) signalling events"/>
</dbReference>
<dbReference type="Proteomes" id="UP000009136">
    <property type="component" value="Chromosome 3"/>
</dbReference>
<dbReference type="Bgee" id="ENSBTAG00000006295">
    <property type="expression patterns" value="Expressed in adenohypophysis and 61 other cell types or tissues"/>
</dbReference>
<dbReference type="GO" id="GO:0005737">
    <property type="term" value="C:cytoplasm"/>
    <property type="evidence" value="ECO:0000318"/>
    <property type="project" value="GO_Central"/>
</dbReference>
<dbReference type="GO" id="GO:0005615">
    <property type="term" value="C:extracellular space"/>
    <property type="evidence" value="ECO:0000318"/>
    <property type="project" value="GO_Central"/>
</dbReference>
<dbReference type="GO" id="GO:0005179">
    <property type="term" value="F:hormone activity"/>
    <property type="evidence" value="ECO:0000315"/>
    <property type="project" value="AgBase"/>
</dbReference>
<dbReference type="GO" id="GO:0007186">
    <property type="term" value="P:G protein-coupled receptor signaling pathway"/>
    <property type="evidence" value="ECO:0000318"/>
    <property type="project" value="GO_Central"/>
</dbReference>
<dbReference type="CDD" id="cd00069">
    <property type="entry name" value="GHB_like"/>
    <property type="match status" value="1"/>
</dbReference>
<dbReference type="FunFam" id="2.10.90.10:FF:000007">
    <property type="entry name" value="Luteinizing hormone beta subunit"/>
    <property type="match status" value="1"/>
</dbReference>
<dbReference type="Gene3D" id="2.10.90.10">
    <property type="entry name" value="Cystine-knot cytokines"/>
    <property type="match status" value="1"/>
</dbReference>
<dbReference type="InterPro" id="IPR029034">
    <property type="entry name" value="Cystine-knot_cytokine"/>
</dbReference>
<dbReference type="InterPro" id="IPR006208">
    <property type="entry name" value="Glyco_hormone_CN"/>
</dbReference>
<dbReference type="InterPro" id="IPR001545">
    <property type="entry name" value="Gonadotropin_bsu"/>
</dbReference>
<dbReference type="InterPro" id="IPR018245">
    <property type="entry name" value="Gonadotropin_bsu_CS"/>
</dbReference>
<dbReference type="PANTHER" id="PTHR11515">
    <property type="entry name" value="GLYCOPROTEIN HORMONE BETA CHAIN"/>
    <property type="match status" value="1"/>
</dbReference>
<dbReference type="PANTHER" id="PTHR11515:SF5">
    <property type="entry name" value="THYROTROPIN SUBUNIT BETA"/>
    <property type="match status" value="1"/>
</dbReference>
<dbReference type="Pfam" id="PF00007">
    <property type="entry name" value="Cys_knot"/>
    <property type="match status" value="1"/>
</dbReference>
<dbReference type="SMART" id="SM00068">
    <property type="entry name" value="GHB"/>
    <property type="match status" value="1"/>
</dbReference>
<dbReference type="SUPFAM" id="SSF57501">
    <property type="entry name" value="Cystine-knot cytokines"/>
    <property type="match status" value="1"/>
</dbReference>
<dbReference type="PROSITE" id="PS00261">
    <property type="entry name" value="GLYCO_HORMONE_BETA_1"/>
    <property type="match status" value="1"/>
</dbReference>
<dbReference type="PROSITE" id="PS00689">
    <property type="entry name" value="GLYCO_HORMONE_BETA_2"/>
    <property type="match status" value="1"/>
</dbReference>
<gene>
    <name type="primary">TSHB</name>
</gene>